<comment type="function">
    <text evidence="1">Forms part of the ribosomal stalk, playing a central role in the interaction of the ribosome with GTP-bound translation factors.</text>
</comment>
<comment type="subunit">
    <text evidence="1">Part of the ribosomal stalk of the 50S ribosomal subunit. The N-terminus interacts with L11 and the large rRNA to form the base of the stalk. The C-terminus forms an elongated spine to which L12 dimers bind in a sequential fashion forming a multimeric L10(L12)X complex.</text>
</comment>
<comment type="similarity">
    <text evidence="1">Belongs to the universal ribosomal protein uL10 family.</text>
</comment>
<name>RL10_FRATF</name>
<reference key="1">
    <citation type="journal article" date="2009" name="PLoS ONE">
        <title>Complete genome sequence of Francisella tularensis subspecies holarctica FTNF002-00.</title>
        <authorList>
            <person name="Barabote R.D."/>
            <person name="Xie G."/>
            <person name="Brettin T.S."/>
            <person name="Hinrichs S.H."/>
            <person name="Fey P.D."/>
            <person name="Jay J.J."/>
            <person name="Engle J.L."/>
            <person name="Godbole S.D."/>
            <person name="Noronha J.M."/>
            <person name="Scheuermann R.H."/>
            <person name="Zhou L.W."/>
            <person name="Lion C."/>
            <person name="Dempsey M.P."/>
        </authorList>
    </citation>
    <scope>NUCLEOTIDE SEQUENCE [LARGE SCALE GENOMIC DNA]</scope>
    <source>
        <strain>FTNF002-00 / FTA</strain>
    </source>
</reference>
<gene>
    <name evidence="1" type="primary">rplJ</name>
    <name type="ordered locus">FTA_1850</name>
</gene>
<feature type="chain" id="PRO_1000005500" description="Large ribosomal subunit protein uL10">
    <location>
        <begin position="1"/>
        <end position="172"/>
    </location>
</feature>
<sequence length="172" mass="18732">MALRIEDKKAIVAEVAEQVSSALSAAVADYRGLTVNQMTSLRKQARESGVYLRVVRNNLARLAIKGTEFECLADALKGPLVLALSKDEPGAAAKLFKNFQKDHNAFEVKNLAMSGELFGPEKLDDFAKLPTREEALATLLNIMQAPVTKFVRTLNEIPSQAVRVFAAVGDSK</sequence>
<evidence type="ECO:0000255" key="1">
    <source>
        <dbReference type="HAMAP-Rule" id="MF_00362"/>
    </source>
</evidence>
<evidence type="ECO:0000305" key="2"/>
<keyword id="KW-0687">Ribonucleoprotein</keyword>
<keyword id="KW-0689">Ribosomal protein</keyword>
<keyword id="KW-0694">RNA-binding</keyword>
<keyword id="KW-0699">rRNA-binding</keyword>
<protein>
    <recommendedName>
        <fullName evidence="1">Large ribosomal subunit protein uL10</fullName>
    </recommendedName>
    <alternativeName>
        <fullName evidence="2">50S ribosomal protein L10</fullName>
    </alternativeName>
</protein>
<dbReference type="EMBL" id="CP000803">
    <property type="protein sequence ID" value="ABU62325.1"/>
    <property type="molecule type" value="Genomic_DNA"/>
</dbReference>
<dbReference type="RefSeq" id="WP_003017231.1">
    <property type="nucleotide sequence ID" value="NC_009749.1"/>
</dbReference>
<dbReference type="SMR" id="A7NEC2"/>
<dbReference type="KEGG" id="fta:FTA_1850"/>
<dbReference type="HOGENOM" id="CLU_092227_0_1_6"/>
<dbReference type="GO" id="GO:1990904">
    <property type="term" value="C:ribonucleoprotein complex"/>
    <property type="evidence" value="ECO:0007669"/>
    <property type="project" value="UniProtKB-KW"/>
</dbReference>
<dbReference type="GO" id="GO:0005840">
    <property type="term" value="C:ribosome"/>
    <property type="evidence" value="ECO:0007669"/>
    <property type="project" value="UniProtKB-KW"/>
</dbReference>
<dbReference type="GO" id="GO:0070180">
    <property type="term" value="F:large ribosomal subunit rRNA binding"/>
    <property type="evidence" value="ECO:0007669"/>
    <property type="project" value="UniProtKB-UniRule"/>
</dbReference>
<dbReference type="GO" id="GO:0006412">
    <property type="term" value="P:translation"/>
    <property type="evidence" value="ECO:0007669"/>
    <property type="project" value="UniProtKB-UniRule"/>
</dbReference>
<dbReference type="CDD" id="cd05797">
    <property type="entry name" value="Ribosomal_L10"/>
    <property type="match status" value="1"/>
</dbReference>
<dbReference type="Gene3D" id="3.30.70.1730">
    <property type="match status" value="1"/>
</dbReference>
<dbReference type="Gene3D" id="6.10.250.290">
    <property type="match status" value="1"/>
</dbReference>
<dbReference type="HAMAP" id="MF_00362">
    <property type="entry name" value="Ribosomal_uL10"/>
    <property type="match status" value="1"/>
</dbReference>
<dbReference type="InterPro" id="IPR001790">
    <property type="entry name" value="Ribosomal_uL10"/>
</dbReference>
<dbReference type="InterPro" id="IPR043141">
    <property type="entry name" value="Ribosomal_uL10-like_sf"/>
</dbReference>
<dbReference type="InterPro" id="IPR022973">
    <property type="entry name" value="Ribosomal_uL10_bac"/>
</dbReference>
<dbReference type="InterPro" id="IPR047865">
    <property type="entry name" value="Ribosomal_uL10_bac_type"/>
</dbReference>
<dbReference type="NCBIfam" id="NF000955">
    <property type="entry name" value="PRK00099.1-1"/>
    <property type="match status" value="1"/>
</dbReference>
<dbReference type="PANTHER" id="PTHR11560">
    <property type="entry name" value="39S RIBOSOMAL PROTEIN L10, MITOCHONDRIAL"/>
    <property type="match status" value="1"/>
</dbReference>
<dbReference type="Pfam" id="PF00466">
    <property type="entry name" value="Ribosomal_L10"/>
    <property type="match status" value="1"/>
</dbReference>
<dbReference type="SUPFAM" id="SSF160369">
    <property type="entry name" value="Ribosomal protein L10-like"/>
    <property type="match status" value="1"/>
</dbReference>
<accession>A7NEC2</accession>
<proteinExistence type="inferred from homology"/>
<organism>
    <name type="scientific">Francisella tularensis subsp. holarctica (strain FTNF002-00 / FTA)</name>
    <dbReference type="NCBI Taxonomy" id="458234"/>
    <lineage>
        <taxon>Bacteria</taxon>
        <taxon>Pseudomonadati</taxon>
        <taxon>Pseudomonadota</taxon>
        <taxon>Gammaproteobacteria</taxon>
        <taxon>Thiotrichales</taxon>
        <taxon>Francisellaceae</taxon>
        <taxon>Francisella</taxon>
    </lineage>
</organism>